<keyword id="KW-0997">Cell inner membrane</keyword>
<keyword id="KW-1003">Cell membrane</keyword>
<keyword id="KW-0407">Ion channel</keyword>
<keyword id="KW-0406">Ion transport</keyword>
<keyword id="KW-0472">Membrane</keyword>
<keyword id="KW-0479">Metal-binding</keyword>
<keyword id="KW-1185">Reference proteome</keyword>
<keyword id="KW-0915">Sodium</keyword>
<keyword id="KW-0812">Transmembrane</keyword>
<keyword id="KW-1133">Transmembrane helix</keyword>
<keyword id="KW-0813">Transport</keyword>
<gene>
    <name evidence="1" type="primary">fluC</name>
    <name evidence="1" type="synonym">crcB</name>
    <name type="ordered locus">Suden_0486</name>
</gene>
<name>FLUC_SULDN</name>
<organism>
    <name type="scientific">Sulfurimonas denitrificans (strain ATCC 33889 / DSM 1251)</name>
    <name type="common">Thiomicrospira denitrificans (strain ATCC 33889 / DSM 1251)</name>
    <dbReference type="NCBI Taxonomy" id="326298"/>
    <lineage>
        <taxon>Bacteria</taxon>
        <taxon>Pseudomonadati</taxon>
        <taxon>Campylobacterota</taxon>
        <taxon>Epsilonproteobacteria</taxon>
        <taxon>Campylobacterales</taxon>
        <taxon>Sulfurimonadaceae</taxon>
        <taxon>Sulfurimonas</taxon>
    </lineage>
</organism>
<accession>Q30TB5</accession>
<proteinExistence type="inferred from homology"/>
<feature type="chain" id="PRO_0000252959" description="Fluoride-specific ion channel FluC">
    <location>
        <begin position="1"/>
        <end position="129"/>
    </location>
</feature>
<feature type="transmembrane region" description="Helical" evidence="1">
    <location>
        <begin position="6"/>
        <end position="26"/>
    </location>
</feature>
<feature type="transmembrane region" description="Helical" evidence="1">
    <location>
        <begin position="35"/>
        <end position="55"/>
    </location>
</feature>
<feature type="transmembrane region" description="Helical" evidence="1">
    <location>
        <begin position="73"/>
        <end position="93"/>
    </location>
</feature>
<feature type="transmembrane region" description="Helical" evidence="1">
    <location>
        <begin position="98"/>
        <end position="118"/>
    </location>
</feature>
<feature type="binding site" evidence="1">
    <location>
        <position position="77"/>
    </location>
    <ligand>
        <name>Na(+)</name>
        <dbReference type="ChEBI" id="CHEBI:29101"/>
        <note>structural</note>
    </ligand>
</feature>
<feature type="binding site" evidence="1">
    <location>
        <position position="80"/>
    </location>
    <ligand>
        <name>Na(+)</name>
        <dbReference type="ChEBI" id="CHEBI:29101"/>
        <note>structural</note>
    </ligand>
</feature>
<sequence length="129" mass="13713">MSWQTILAIGSGGFIGAVLRAYFNGIISHKMPHDIPFGTLGVNLVGSFIMGILIAYFMYSTIFSLHVKSFLSTGVLGALTTYSTFAIESFLLLNSGHIALALANISLNAFGSILMAGGGFYIIKLSLRA</sequence>
<evidence type="ECO:0000255" key="1">
    <source>
        <dbReference type="HAMAP-Rule" id="MF_00454"/>
    </source>
</evidence>
<evidence type="ECO:0000305" key="2"/>
<protein>
    <recommendedName>
        <fullName evidence="1">Fluoride-specific ion channel FluC</fullName>
    </recommendedName>
</protein>
<reference key="1">
    <citation type="journal article" date="2008" name="Appl. Environ. Microbiol.">
        <title>Genome of the epsilonproteobacterial chemolithoautotroph Sulfurimonas denitrificans.</title>
        <authorList>
            <person name="Sievert S.M."/>
            <person name="Scott K.M."/>
            <person name="Klotz M.G."/>
            <person name="Chain P.S.G."/>
            <person name="Hauser L.J."/>
            <person name="Hemp J."/>
            <person name="Huegler M."/>
            <person name="Land M."/>
            <person name="Lapidus A."/>
            <person name="Larimer F.W."/>
            <person name="Lucas S."/>
            <person name="Malfatti S.A."/>
            <person name="Meyer F."/>
            <person name="Paulsen I.T."/>
            <person name="Ren Q."/>
            <person name="Simon J."/>
            <person name="Bailey K."/>
            <person name="Diaz E."/>
            <person name="Fitzpatrick K.A."/>
            <person name="Glover B."/>
            <person name="Gwatney N."/>
            <person name="Korajkic A."/>
            <person name="Long A."/>
            <person name="Mobberley J.M."/>
            <person name="Pantry S.N."/>
            <person name="Pazder G."/>
            <person name="Peterson S."/>
            <person name="Quintanilla J.D."/>
            <person name="Sprinkle R."/>
            <person name="Stephens J."/>
            <person name="Thomas P."/>
            <person name="Vaughn R."/>
            <person name="Weber M.J."/>
            <person name="Wooten L.L."/>
        </authorList>
    </citation>
    <scope>NUCLEOTIDE SEQUENCE [LARGE SCALE GENOMIC DNA]</scope>
    <source>
        <strain>ATCC 33889 / DSM 1251</strain>
    </source>
</reference>
<comment type="function">
    <text evidence="1">Fluoride-specific ion channel. Important for reducing fluoride concentration in the cell, thus reducing its toxicity.</text>
</comment>
<comment type="catalytic activity">
    <reaction evidence="1">
        <text>fluoride(in) = fluoride(out)</text>
        <dbReference type="Rhea" id="RHEA:76159"/>
        <dbReference type="ChEBI" id="CHEBI:17051"/>
    </reaction>
    <physiologicalReaction direction="left-to-right" evidence="1">
        <dbReference type="Rhea" id="RHEA:76160"/>
    </physiologicalReaction>
</comment>
<comment type="activity regulation">
    <text evidence="1">Na(+) is not transported, but it plays an essential structural role and its presence is essential for fluoride channel function.</text>
</comment>
<comment type="subcellular location">
    <subcellularLocation>
        <location evidence="1">Cell inner membrane</location>
        <topology evidence="1">Multi-pass membrane protein</topology>
    </subcellularLocation>
</comment>
<comment type="similarity">
    <text evidence="1">Belongs to the fluoride channel Fluc/FEX (TC 1.A.43) family.</text>
</comment>
<comment type="sequence caution" evidence="2">
    <conflict type="erroneous initiation">
        <sequence resource="EMBL-CDS" id="ABB43766"/>
    </conflict>
</comment>
<dbReference type="EMBL" id="CP000153">
    <property type="protein sequence ID" value="ABB43766.1"/>
    <property type="status" value="ALT_INIT"/>
    <property type="molecule type" value="Genomic_DNA"/>
</dbReference>
<dbReference type="SMR" id="Q30TB5"/>
<dbReference type="STRING" id="326298.Suden_0486"/>
<dbReference type="KEGG" id="tdn:Suden_0486"/>
<dbReference type="eggNOG" id="COG0239">
    <property type="taxonomic scope" value="Bacteria"/>
</dbReference>
<dbReference type="HOGENOM" id="CLU_114342_3_0_7"/>
<dbReference type="OrthoDB" id="9806299at2"/>
<dbReference type="Proteomes" id="UP000002714">
    <property type="component" value="Chromosome"/>
</dbReference>
<dbReference type="GO" id="GO:0005886">
    <property type="term" value="C:plasma membrane"/>
    <property type="evidence" value="ECO:0007669"/>
    <property type="project" value="UniProtKB-SubCell"/>
</dbReference>
<dbReference type="GO" id="GO:0062054">
    <property type="term" value="F:fluoride channel activity"/>
    <property type="evidence" value="ECO:0007669"/>
    <property type="project" value="UniProtKB-UniRule"/>
</dbReference>
<dbReference type="GO" id="GO:0046872">
    <property type="term" value="F:metal ion binding"/>
    <property type="evidence" value="ECO:0007669"/>
    <property type="project" value="UniProtKB-KW"/>
</dbReference>
<dbReference type="GO" id="GO:0140114">
    <property type="term" value="P:cellular detoxification of fluoride"/>
    <property type="evidence" value="ECO:0007669"/>
    <property type="project" value="UniProtKB-UniRule"/>
</dbReference>
<dbReference type="HAMAP" id="MF_00454">
    <property type="entry name" value="FluC"/>
    <property type="match status" value="1"/>
</dbReference>
<dbReference type="InterPro" id="IPR003691">
    <property type="entry name" value="FluC"/>
</dbReference>
<dbReference type="NCBIfam" id="TIGR00494">
    <property type="entry name" value="crcB"/>
    <property type="match status" value="1"/>
</dbReference>
<dbReference type="PANTHER" id="PTHR28259">
    <property type="entry name" value="FLUORIDE EXPORT PROTEIN 1-RELATED"/>
    <property type="match status" value="1"/>
</dbReference>
<dbReference type="PANTHER" id="PTHR28259:SF1">
    <property type="entry name" value="FLUORIDE EXPORT PROTEIN 1-RELATED"/>
    <property type="match status" value="1"/>
</dbReference>
<dbReference type="Pfam" id="PF02537">
    <property type="entry name" value="CRCB"/>
    <property type="match status" value="1"/>
</dbReference>